<dbReference type="EMBL" id="AM286415">
    <property type="protein sequence ID" value="CAL14013.1"/>
    <property type="molecule type" value="Genomic_DNA"/>
</dbReference>
<dbReference type="RefSeq" id="WP_005159611.1">
    <property type="nucleotide sequence ID" value="NC_008800.1"/>
</dbReference>
<dbReference type="RefSeq" id="YP_001008139.1">
    <property type="nucleotide sequence ID" value="NC_008800.1"/>
</dbReference>
<dbReference type="SMR" id="A1JSF6"/>
<dbReference type="GeneID" id="61817420"/>
<dbReference type="KEGG" id="yen:YE3993"/>
<dbReference type="PATRIC" id="fig|393305.7.peg.4251"/>
<dbReference type="eggNOG" id="COG0316">
    <property type="taxonomic scope" value="Bacteria"/>
</dbReference>
<dbReference type="eggNOG" id="COG0694">
    <property type="taxonomic scope" value="Bacteria"/>
</dbReference>
<dbReference type="HOGENOM" id="CLU_094569_0_0_6"/>
<dbReference type="OrthoDB" id="9785450at2"/>
<dbReference type="Proteomes" id="UP000000642">
    <property type="component" value="Chromosome"/>
</dbReference>
<dbReference type="GO" id="GO:0051539">
    <property type="term" value="F:4 iron, 4 sulfur cluster binding"/>
    <property type="evidence" value="ECO:0007669"/>
    <property type="project" value="UniProtKB-UniRule"/>
</dbReference>
<dbReference type="GO" id="GO:0005506">
    <property type="term" value="F:iron ion binding"/>
    <property type="evidence" value="ECO:0007669"/>
    <property type="project" value="InterPro"/>
</dbReference>
<dbReference type="GO" id="GO:0016226">
    <property type="term" value="P:iron-sulfur cluster assembly"/>
    <property type="evidence" value="ECO:0007669"/>
    <property type="project" value="UniProtKB-UniRule"/>
</dbReference>
<dbReference type="GO" id="GO:0051604">
    <property type="term" value="P:protein maturation"/>
    <property type="evidence" value="ECO:0007669"/>
    <property type="project" value="UniProtKB-UniRule"/>
</dbReference>
<dbReference type="Gene3D" id="3.30.300.130">
    <property type="entry name" value="Fe-S cluster assembly (FSCA)"/>
    <property type="match status" value="1"/>
</dbReference>
<dbReference type="Gene3D" id="2.60.300.12">
    <property type="entry name" value="HesB-like domain"/>
    <property type="match status" value="1"/>
</dbReference>
<dbReference type="HAMAP" id="MF_01637">
    <property type="entry name" value="Fe_S_biogen_NfuA"/>
    <property type="match status" value="1"/>
</dbReference>
<dbReference type="InterPro" id="IPR017726">
    <property type="entry name" value="Fe/S_biogenesis_protein_NfuA"/>
</dbReference>
<dbReference type="InterPro" id="IPR000361">
    <property type="entry name" value="FeS_biogenesis"/>
</dbReference>
<dbReference type="InterPro" id="IPR034904">
    <property type="entry name" value="FSCA_dom_sf"/>
</dbReference>
<dbReference type="InterPro" id="IPR035903">
    <property type="entry name" value="HesB-like_dom_sf"/>
</dbReference>
<dbReference type="InterPro" id="IPR001075">
    <property type="entry name" value="NIF_FeS_clus_asmbl_NifU_C"/>
</dbReference>
<dbReference type="NCBIfam" id="NF008392">
    <property type="entry name" value="PRK11190.1"/>
    <property type="match status" value="1"/>
</dbReference>
<dbReference type="NCBIfam" id="TIGR03341">
    <property type="entry name" value="YhgI_GntY"/>
    <property type="match status" value="1"/>
</dbReference>
<dbReference type="PANTHER" id="PTHR11178:SF51">
    <property type="entry name" value="FE_S BIOGENESIS PROTEIN NFUA"/>
    <property type="match status" value="1"/>
</dbReference>
<dbReference type="PANTHER" id="PTHR11178">
    <property type="entry name" value="IRON-SULFUR CLUSTER SCAFFOLD PROTEIN NFU-RELATED"/>
    <property type="match status" value="1"/>
</dbReference>
<dbReference type="Pfam" id="PF01521">
    <property type="entry name" value="Fe-S_biosyn"/>
    <property type="match status" value="1"/>
</dbReference>
<dbReference type="Pfam" id="PF01106">
    <property type="entry name" value="NifU"/>
    <property type="match status" value="1"/>
</dbReference>
<dbReference type="SUPFAM" id="SSF117916">
    <property type="entry name" value="Fe-S cluster assembly (FSCA) domain-like"/>
    <property type="match status" value="1"/>
</dbReference>
<dbReference type="SUPFAM" id="SSF89360">
    <property type="entry name" value="HesB-like domain"/>
    <property type="match status" value="1"/>
</dbReference>
<name>NFUA_YERE8</name>
<keyword id="KW-0004">4Fe-4S</keyword>
<keyword id="KW-0408">Iron</keyword>
<keyword id="KW-0411">Iron-sulfur</keyword>
<keyword id="KW-0479">Metal-binding</keyword>
<evidence type="ECO:0000255" key="1">
    <source>
        <dbReference type="HAMAP-Rule" id="MF_01637"/>
    </source>
</evidence>
<proteinExistence type="inferred from homology"/>
<gene>
    <name evidence="1" type="primary">nfuA</name>
    <name type="ordered locus">YE3993</name>
</gene>
<comment type="function">
    <text evidence="1">Involved in iron-sulfur cluster biogenesis. Binds a 4Fe-4S cluster, can transfer this cluster to apoproteins, and thereby intervenes in the maturation of Fe/S proteins. Could also act as a scaffold/chaperone for damaged Fe/S proteins.</text>
</comment>
<comment type="cofactor">
    <cofactor evidence="1">
        <name>[4Fe-4S] cluster</name>
        <dbReference type="ChEBI" id="CHEBI:49883"/>
    </cofactor>
    <text evidence="1">Binds 1 [4Fe-4S] cluster per subunit. The cluster is presumably bound at the interface of two monomers.</text>
</comment>
<comment type="subunit">
    <text evidence="1">Homodimer.</text>
</comment>
<comment type="similarity">
    <text evidence="1">Belongs to the NfuA family.</text>
</comment>
<accession>A1JSF6</accession>
<organism>
    <name type="scientific">Yersinia enterocolitica serotype O:8 / biotype 1B (strain NCTC 13174 / 8081)</name>
    <dbReference type="NCBI Taxonomy" id="393305"/>
    <lineage>
        <taxon>Bacteria</taxon>
        <taxon>Pseudomonadati</taxon>
        <taxon>Pseudomonadota</taxon>
        <taxon>Gammaproteobacteria</taxon>
        <taxon>Enterobacterales</taxon>
        <taxon>Yersiniaceae</taxon>
        <taxon>Yersinia</taxon>
    </lineage>
</organism>
<reference key="1">
    <citation type="journal article" date="2006" name="PLoS Genet.">
        <title>The complete genome sequence and comparative genome analysis of the high pathogenicity Yersinia enterocolitica strain 8081.</title>
        <authorList>
            <person name="Thomson N.R."/>
            <person name="Howard S."/>
            <person name="Wren B.W."/>
            <person name="Holden M.T.G."/>
            <person name="Crossman L."/>
            <person name="Challis G.L."/>
            <person name="Churcher C."/>
            <person name="Mungall K."/>
            <person name="Brooks K."/>
            <person name="Chillingworth T."/>
            <person name="Feltwell T."/>
            <person name="Abdellah Z."/>
            <person name="Hauser H."/>
            <person name="Jagels K."/>
            <person name="Maddison M."/>
            <person name="Moule S."/>
            <person name="Sanders M."/>
            <person name="Whitehead S."/>
            <person name="Quail M.A."/>
            <person name="Dougan G."/>
            <person name="Parkhill J."/>
            <person name="Prentice M.B."/>
        </authorList>
    </citation>
    <scope>NUCLEOTIDE SEQUENCE [LARGE SCALE GENOMIC DNA]</scope>
    <source>
        <strain>NCTC 13174 / 8081</strain>
    </source>
</reference>
<sequence length="191" mass="21075">MITITDAAQSHFAKLLANQEEGTQIRVFVINPGTPTAECGVSYCPPDAVEATDTELKFEQLSAYIDELSKPYLEDAEIDFVTDQLGSQLTLKAPNAKMRKVDDNAPLMERVEYVLQSQINPQLAGHGGRVTLMEITPDALAILQFGGGCNGCSMVDVTLKEGIEKELLQKFPELKGVRDLTEHQRGEHSYY</sequence>
<feature type="chain" id="PRO_0000292096" description="Fe/S biogenesis protein NfuA">
    <location>
        <begin position="1"/>
        <end position="191"/>
    </location>
</feature>
<feature type="binding site" evidence="1">
    <location>
        <position position="149"/>
    </location>
    <ligand>
        <name>[4Fe-4S] cluster</name>
        <dbReference type="ChEBI" id="CHEBI:49883"/>
    </ligand>
</feature>
<feature type="binding site" evidence="1">
    <location>
        <position position="152"/>
    </location>
    <ligand>
        <name>[4Fe-4S] cluster</name>
        <dbReference type="ChEBI" id="CHEBI:49883"/>
    </ligand>
</feature>
<protein>
    <recommendedName>
        <fullName evidence="1">Fe/S biogenesis protein NfuA</fullName>
    </recommendedName>
</protein>